<organism>
    <name type="scientific">Xanthomonas axonopodis pv. citri (strain 306)</name>
    <dbReference type="NCBI Taxonomy" id="190486"/>
    <lineage>
        <taxon>Bacteria</taxon>
        <taxon>Pseudomonadati</taxon>
        <taxon>Pseudomonadota</taxon>
        <taxon>Gammaproteobacteria</taxon>
        <taxon>Lysobacterales</taxon>
        <taxon>Lysobacteraceae</taxon>
        <taxon>Xanthomonas</taxon>
    </lineage>
</organism>
<evidence type="ECO:0000255" key="1">
    <source>
        <dbReference type="HAMAP-Rule" id="MF_01967"/>
    </source>
</evidence>
<evidence type="ECO:0000255" key="2">
    <source>
        <dbReference type="PROSITE-ProRule" id="PRU00236"/>
    </source>
</evidence>
<evidence type="ECO:0000305" key="3"/>
<dbReference type="EC" id="2.3.1.286" evidence="1 2"/>
<dbReference type="EMBL" id="AE008923">
    <property type="protein sequence ID" value="AAM35212.1"/>
    <property type="status" value="ALT_INIT"/>
    <property type="molecule type" value="Genomic_DNA"/>
</dbReference>
<dbReference type="RefSeq" id="WP_011050244.1">
    <property type="nucleotide sequence ID" value="NC_003919.1"/>
</dbReference>
<dbReference type="SMR" id="Q8PQK3"/>
<dbReference type="KEGG" id="xac:XAC0320"/>
<dbReference type="eggNOG" id="COG0846">
    <property type="taxonomic scope" value="Bacteria"/>
</dbReference>
<dbReference type="HOGENOM" id="CLU_023643_3_2_6"/>
<dbReference type="Proteomes" id="UP000000576">
    <property type="component" value="Chromosome"/>
</dbReference>
<dbReference type="GO" id="GO:0005737">
    <property type="term" value="C:cytoplasm"/>
    <property type="evidence" value="ECO:0007669"/>
    <property type="project" value="UniProtKB-SubCell"/>
</dbReference>
<dbReference type="GO" id="GO:0017136">
    <property type="term" value="F:histone deacetylase activity, NAD-dependent"/>
    <property type="evidence" value="ECO:0007669"/>
    <property type="project" value="TreeGrafter"/>
</dbReference>
<dbReference type="GO" id="GO:0070403">
    <property type="term" value="F:NAD+ binding"/>
    <property type="evidence" value="ECO:0007669"/>
    <property type="project" value="UniProtKB-UniRule"/>
</dbReference>
<dbReference type="GO" id="GO:0008270">
    <property type="term" value="F:zinc ion binding"/>
    <property type="evidence" value="ECO:0007669"/>
    <property type="project" value="UniProtKB-UniRule"/>
</dbReference>
<dbReference type="CDD" id="cd01409">
    <property type="entry name" value="SIRT4"/>
    <property type="match status" value="1"/>
</dbReference>
<dbReference type="Gene3D" id="3.30.1600.10">
    <property type="entry name" value="SIR2/SIRT2 'Small Domain"/>
    <property type="match status" value="1"/>
</dbReference>
<dbReference type="Gene3D" id="3.40.50.1220">
    <property type="entry name" value="TPP-binding domain"/>
    <property type="match status" value="1"/>
</dbReference>
<dbReference type="HAMAP" id="MF_01967">
    <property type="entry name" value="Sirtuin_ClassII"/>
    <property type="match status" value="1"/>
</dbReference>
<dbReference type="InterPro" id="IPR029035">
    <property type="entry name" value="DHS-like_NAD/FAD-binding_dom"/>
</dbReference>
<dbReference type="InterPro" id="IPR050134">
    <property type="entry name" value="NAD-dep_sirtuin_deacylases"/>
</dbReference>
<dbReference type="InterPro" id="IPR003000">
    <property type="entry name" value="Sirtuin"/>
</dbReference>
<dbReference type="InterPro" id="IPR026591">
    <property type="entry name" value="Sirtuin_cat_small_dom_sf"/>
</dbReference>
<dbReference type="InterPro" id="IPR026587">
    <property type="entry name" value="Sirtuin_class_II"/>
</dbReference>
<dbReference type="InterPro" id="IPR026590">
    <property type="entry name" value="Ssirtuin_cat_dom"/>
</dbReference>
<dbReference type="NCBIfam" id="NF003738">
    <property type="entry name" value="PRK05333.1"/>
    <property type="match status" value="1"/>
</dbReference>
<dbReference type="PANTHER" id="PTHR11085">
    <property type="entry name" value="NAD-DEPENDENT PROTEIN DEACYLASE SIRTUIN-5, MITOCHONDRIAL-RELATED"/>
    <property type="match status" value="1"/>
</dbReference>
<dbReference type="PANTHER" id="PTHR11085:SF10">
    <property type="entry name" value="NAD-DEPENDENT PROTEIN DEACYLASE SIRTUIN-5, MITOCHONDRIAL-RELATED"/>
    <property type="match status" value="1"/>
</dbReference>
<dbReference type="Pfam" id="PF02146">
    <property type="entry name" value="SIR2"/>
    <property type="match status" value="1"/>
</dbReference>
<dbReference type="SUPFAM" id="SSF52467">
    <property type="entry name" value="DHS-like NAD/FAD-binding domain"/>
    <property type="match status" value="1"/>
</dbReference>
<dbReference type="PROSITE" id="PS50305">
    <property type="entry name" value="SIRTUIN"/>
    <property type="match status" value="1"/>
</dbReference>
<gene>
    <name evidence="1" type="primary">cobB</name>
    <name type="ordered locus">XAC0320</name>
</gene>
<sequence length="293" mass="32065">MTAVPAHDHHTLQDFIERHQRLFVLTGAGCSTDSGIPDYRDLQGGWKRPQPVTFQAFMGELSTRQRYWARSLVGWPRFGLAQPNATHHALAALEARGQLEVLLTQNVDRLHQAAGSQAVIDLHGRLDVVRCMGCERRMPRTEFQVLLEQANPGWAALEAAQAPDGDADLDDVAFEHFVVPPCPVCGGVLKPNVVFFGENVPRARVERAFAHLQAADAVLVVGSSLMVYSGFRFVQTAARNGLPIAALNFGRTRADELLTLKVEQSCAQALAFLHAPPHLPRARSVNDASARSA</sequence>
<accession>Q8PQK3</accession>
<feature type="chain" id="PRO_0000110372" description="NAD-dependent protein deacetylase">
    <location>
        <begin position="1"/>
        <end position="293"/>
    </location>
</feature>
<feature type="domain" description="Deacetylase sirtuin-type" evidence="2">
    <location>
        <begin position="5"/>
        <end position="282"/>
    </location>
</feature>
<feature type="active site" description="Proton acceptor" evidence="2">
    <location>
        <position position="123"/>
    </location>
</feature>
<feature type="binding site" evidence="1">
    <location>
        <begin position="27"/>
        <end position="47"/>
    </location>
    <ligand>
        <name>NAD(+)</name>
        <dbReference type="ChEBI" id="CHEBI:57540"/>
    </ligand>
</feature>
<feature type="binding site" evidence="1">
    <location>
        <begin position="105"/>
        <end position="108"/>
    </location>
    <ligand>
        <name>NAD(+)</name>
        <dbReference type="ChEBI" id="CHEBI:57540"/>
    </ligand>
</feature>
<feature type="binding site" evidence="1">
    <location>
        <position position="131"/>
    </location>
    <ligand>
        <name>Zn(2+)</name>
        <dbReference type="ChEBI" id="CHEBI:29105"/>
    </ligand>
</feature>
<feature type="binding site" evidence="1">
    <location>
        <position position="134"/>
    </location>
    <ligand>
        <name>Zn(2+)</name>
        <dbReference type="ChEBI" id="CHEBI:29105"/>
    </ligand>
</feature>
<feature type="binding site" evidence="1">
    <location>
        <position position="182"/>
    </location>
    <ligand>
        <name>Zn(2+)</name>
        <dbReference type="ChEBI" id="CHEBI:29105"/>
    </ligand>
</feature>
<feature type="binding site" evidence="1">
    <location>
        <position position="185"/>
    </location>
    <ligand>
        <name>Zn(2+)</name>
        <dbReference type="ChEBI" id="CHEBI:29105"/>
    </ligand>
</feature>
<feature type="binding site" evidence="1">
    <location>
        <begin position="222"/>
        <end position="224"/>
    </location>
    <ligand>
        <name>NAD(+)</name>
        <dbReference type="ChEBI" id="CHEBI:57540"/>
    </ligand>
</feature>
<feature type="binding site" evidence="1">
    <location>
        <begin position="248"/>
        <end position="250"/>
    </location>
    <ligand>
        <name>NAD(+)</name>
        <dbReference type="ChEBI" id="CHEBI:57540"/>
    </ligand>
</feature>
<feature type="binding site" evidence="1">
    <location>
        <position position="266"/>
    </location>
    <ligand>
        <name>NAD(+)</name>
        <dbReference type="ChEBI" id="CHEBI:57540"/>
    </ligand>
</feature>
<proteinExistence type="inferred from homology"/>
<keyword id="KW-0963">Cytoplasm</keyword>
<keyword id="KW-0479">Metal-binding</keyword>
<keyword id="KW-0520">NAD</keyword>
<keyword id="KW-0808">Transferase</keyword>
<keyword id="KW-0862">Zinc</keyword>
<comment type="function">
    <text evidence="1">NAD-dependent protein deacetylase which modulates the activities of several enzymes which are inactive in their acetylated form.</text>
</comment>
<comment type="catalytic activity">
    <reaction evidence="1">
        <text>N(6)-acetyl-L-lysyl-[protein] + NAD(+) + H2O = 2''-O-acetyl-ADP-D-ribose + nicotinamide + L-lysyl-[protein]</text>
        <dbReference type="Rhea" id="RHEA:43636"/>
        <dbReference type="Rhea" id="RHEA-COMP:9752"/>
        <dbReference type="Rhea" id="RHEA-COMP:10731"/>
        <dbReference type="ChEBI" id="CHEBI:15377"/>
        <dbReference type="ChEBI" id="CHEBI:17154"/>
        <dbReference type="ChEBI" id="CHEBI:29969"/>
        <dbReference type="ChEBI" id="CHEBI:57540"/>
        <dbReference type="ChEBI" id="CHEBI:61930"/>
        <dbReference type="ChEBI" id="CHEBI:83767"/>
        <dbReference type="EC" id="2.3.1.286"/>
    </reaction>
</comment>
<comment type="cofactor">
    <cofactor evidence="1">
        <name>Zn(2+)</name>
        <dbReference type="ChEBI" id="CHEBI:29105"/>
    </cofactor>
    <text evidence="1">Binds 1 zinc ion per subunit.</text>
</comment>
<comment type="subcellular location">
    <subcellularLocation>
        <location evidence="1">Cytoplasm</location>
    </subcellularLocation>
</comment>
<comment type="similarity">
    <text evidence="1">Belongs to the sirtuin family. Class II subfamily.</text>
</comment>
<comment type="sequence caution" evidence="3">
    <conflict type="erroneous initiation">
        <sequence resource="EMBL-CDS" id="AAM35212"/>
    </conflict>
    <text>Extended N-terminus.</text>
</comment>
<protein>
    <recommendedName>
        <fullName evidence="1">NAD-dependent protein deacetylase</fullName>
        <ecNumber evidence="1 2">2.3.1.286</ecNumber>
    </recommendedName>
    <alternativeName>
        <fullName evidence="1">Regulatory protein SIR2 homolog</fullName>
    </alternativeName>
</protein>
<name>NPD_XANAC</name>
<reference key="1">
    <citation type="journal article" date="2002" name="Nature">
        <title>Comparison of the genomes of two Xanthomonas pathogens with differing host specificities.</title>
        <authorList>
            <person name="da Silva A.C.R."/>
            <person name="Ferro J.A."/>
            <person name="Reinach F.C."/>
            <person name="Farah C.S."/>
            <person name="Furlan L.R."/>
            <person name="Quaggio R.B."/>
            <person name="Monteiro-Vitorello C.B."/>
            <person name="Van Sluys M.A."/>
            <person name="Almeida N.F. Jr."/>
            <person name="Alves L.M.C."/>
            <person name="do Amaral A.M."/>
            <person name="Bertolini M.C."/>
            <person name="Camargo L.E.A."/>
            <person name="Camarotte G."/>
            <person name="Cannavan F."/>
            <person name="Cardozo J."/>
            <person name="Chambergo F."/>
            <person name="Ciapina L.P."/>
            <person name="Cicarelli R.M.B."/>
            <person name="Coutinho L.L."/>
            <person name="Cursino-Santos J.R."/>
            <person name="El-Dorry H."/>
            <person name="Faria J.B."/>
            <person name="Ferreira A.J.S."/>
            <person name="Ferreira R.C.C."/>
            <person name="Ferro M.I.T."/>
            <person name="Formighieri E.F."/>
            <person name="Franco M.C."/>
            <person name="Greggio C.C."/>
            <person name="Gruber A."/>
            <person name="Katsuyama A.M."/>
            <person name="Kishi L.T."/>
            <person name="Leite R.P."/>
            <person name="Lemos E.G.M."/>
            <person name="Lemos M.V.F."/>
            <person name="Locali E.C."/>
            <person name="Machado M.A."/>
            <person name="Madeira A.M.B.N."/>
            <person name="Martinez-Rossi N.M."/>
            <person name="Martins E.C."/>
            <person name="Meidanis J."/>
            <person name="Menck C.F.M."/>
            <person name="Miyaki C.Y."/>
            <person name="Moon D.H."/>
            <person name="Moreira L.M."/>
            <person name="Novo M.T.M."/>
            <person name="Okura V.K."/>
            <person name="Oliveira M.C."/>
            <person name="Oliveira V.R."/>
            <person name="Pereira H.A."/>
            <person name="Rossi A."/>
            <person name="Sena J.A.D."/>
            <person name="Silva C."/>
            <person name="de Souza R.F."/>
            <person name="Spinola L.A.F."/>
            <person name="Takita M.A."/>
            <person name="Tamura R.E."/>
            <person name="Teixeira E.C."/>
            <person name="Tezza R.I.D."/>
            <person name="Trindade dos Santos M."/>
            <person name="Truffi D."/>
            <person name="Tsai S.M."/>
            <person name="White F.F."/>
            <person name="Setubal J.C."/>
            <person name="Kitajima J.P."/>
        </authorList>
    </citation>
    <scope>NUCLEOTIDE SEQUENCE [LARGE SCALE GENOMIC DNA]</scope>
    <source>
        <strain>306</strain>
    </source>
</reference>